<accession>P09389</accession>
<accession>Q77YW9</accession>
<evidence type="ECO:0000255" key="1">
    <source>
        <dbReference type="PROSITE-ProRule" id="PRU01016"/>
    </source>
</evidence>
<evidence type="ECO:0000255" key="2">
    <source>
        <dbReference type="PROSITE-ProRule" id="PRU10018"/>
    </source>
</evidence>
<evidence type="ECO:0000303" key="3">
    <source>
    </source>
</evidence>
<evidence type="ECO:0000303" key="4">
    <source>
    </source>
</evidence>
<evidence type="ECO:0000305" key="5"/>
<feature type="chain" id="PRO_0000087867" description="Orphan methyltransferase M.SPBetaI">
    <location>
        <begin position="1"/>
        <end position="443"/>
    </location>
</feature>
<feature type="domain" description="SAM-dependent MTase C5-type" evidence="1">
    <location>
        <begin position="4"/>
        <end position="440"/>
    </location>
</feature>
<feature type="active site" evidence="1">
    <location>
        <position position="78"/>
    </location>
</feature>
<protein>
    <recommendedName>
        <fullName evidence="3">Orphan methyltransferase M.SPBetaI</fullName>
        <shortName evidence="3">M.SPBetaI</shortName>
        <ecNumber evidence="1">2.1.1.37</ecNumber>
    </recommendedName>
    <alternativeName>
        <fullName>Cytosine-specific methyltransferase SPBetaI</fullName>
    </alternativeName>
    <alternativeName>
        <fullName>Modification methylase SPBetaI</fullName>
    </alternativeName>
</protein>
<name>MTBB_BPSPB</name>
<dbReference type="EC" id="2.1.1.37" evidence="1"/>
<dbReference type="EMBL" id="AF020713">
    <property type="protein sequence ID" value="AAC13115.1"/>
    <property type="molecule type" value="Genomic_DNA"/>
</dbReference>
<dbReference type="EMBL" id="AH001332">
    <property type="protein sequence ID" value="AAA32601.1"/>
    <property type="molecule type" value="Genomic_DNA"/>
</dbReference>
<dbReference type="EMBL" id="AH001332">
    <property type="protein sequence ID" value="AAA32602.1"/>
    <property type="molecule type" value="Genomic_DNA"/>
</dbReference>
<dbReference type="RefSeq" id="NP_046694.1">
    <property type="nucleotide sequence ID" value="NC_001884.1"/>
</dbReference>
<dbReference type="SMR" id="P09389"/>
<dbReference type="REBASE" id="156252">
    <property type="entry name" value="M.Bsu16045ORF2153P"/>
</dbReference>
<dbReference type="REBASE" id="2833">
    <property type="entry name" value="M.SPBetaI"/>
</dbReference>
<dbReference type="GeneID" id="1261493"/>
<dbReference type="KEGG" id="vg:1261493"/>
<dbReference type="Proteomes" id="UP000009091">
    <property type="component" value="Genome"/>
</dbReference>
<dbReference type="GO" id="GO:0003886">
    <property type="term" value="F:DNA (cytosine-5-)-methyltransferase activity"/>
    <property type="evidence" value="ECO:0007669"/>
    <property type="project" value="UniProtKB-EC"/>
</dbReference>
<dbReference type="GO" id="GO:0032259">
    <property type="term" value="P:methylation"/>
    <property type="evidence" value="ECO:0007669"/>
    <property type="project" value="UniProtKB-KW"/>
</dbReference>
<dbReference type="GO" id="GO:0099018">
    <property type="term" value="P:symbiont-mediated evasion of host restriction-modification system"/>
    <property type="evidence" value="ECO:0007669"/>
    <property type="project" value="UniProtKB-KW"/>
</dbReference>
<dbReference type="GO" id="GO:0052170">
    <property type="term" value="P:symbiont-mediated suppression of host innate immune response"/>
    <property type="evidence" value="ECO:0007669"/>
    <property type="project" value="UniProtKB-KW"/>
</dbReference>
<dbReference type="CDD" id="cd00315">
    <property type="entry name" value="Cyt_C5_DNA_methylase"/>
    <property type="match status" value="1"/>
</dbReference>
<dbReference type="Gene3D" id="3.90.120.10">
    <property type="entry name" value="DNA Methylase, subunit A, domain 2"/>
    <property type="match status" value="1"/>
</dbReference>
<dbReference type="Gene3D" id="3.40.50.150">
    <property type="entry name" value="Vaccinia Virus protein VP39"/>
    <property type="match status" value="1"/>
</dbReference>
<dbReference type="InterPro" id="IPR050750">
    <property type="entry name" value="C5-MTase"/>
</dbReference>
<dbReference type="InterPro" id="IPR018117">
    <property type="entry name" value="C5_DNA_meth_AS"/>
</dbReference>
<dbReference type="InterPro" id="IPR001525">
    <property type="entry name" value="C5_MeTfrase"/>
</dbReference>
<dbReference type="InterPro" id="IPR031303">
    <property type="entry name" value="C5_meth_CS"/>
</dbReference>
<dbReference type="InterPro" id="IPR029063">
    <property type="entry name" value="SAM-dependent_MTases_sf"/>
</dbReference>
<dbReference type="NCBIfam" id="TIGR00675">
    <property type="entry name" value="dcm"/>
    <property type="match status" value="1"/>
</dbReference>
<dbReference type="PANTHER" id="PTHR46098">
    <property type="entry name" value="TRNA (CYTOSINE(38)-C(5))-METHYLTRANSFERASE"/>
    <property type="match status" value="1"/>
</dbReference>
<dbReference type="PANTHER" id="PTHR46098:SF1">
    <property type="entry name" value="TRNA (CYTOSINE(38)-C(5))-METHYLTRANSFERASE"/>
    <property type="match status" value="1"/>
</dbReference>
<dbReference type="Pfam" id="PF00145">
    <property type="entry name" value="DNA_methylase"/>
    <property type="match status" value="2"/>
</dbReference>
<dbReference type="PRINTS" id="PR00105">
    <property type="entry name" value="C5METTRFRASE"/>
</dbReference>
<dbReference type="SUPFAM" id="SSF53335">
    <property type="entry name" value="S-adenosyl-L-methionine-dependent methyltransferases"/>
    <property type="match status" value="1"/>
</dbReference>
<dbReference type="PROSITE" id="PS00094">
    <property type="entry name" value="C5_MTASE_1"/>
    <property type="match status" value="1"/>
</dbReference>
<dbReference type="PROSITE" id="PS00095">
    <property type="entry name" value="C5_MTASE_2"/>
    <property type="match status" value="1"/>
</dbReference>
<dbReference type="PROSITE" id="PS51679">
    <property type="entry name" value="SAM_MT_C5"/>
    <property type="match status" value="1"/>
</dbReference>
<keyword id="KW-0945">Host-virus interaction</keyword>
<keyword id="KW-1090">Inhibition of host innate immune response by virus</keyword>
<keyword id="KW-0489">Methyltransferase</keyword>
<keyword id="KW-1185">Reference proteome</keyword>
<keyword id="KW-1258">Restriction-modification system evasion by virus</keyword>
<keyword id="KW-0949">S-adenosyl-L-methionine</keyword>
<keyword id="KW-0808">Transferase</keyword>
<keyword id="KW-0899">Viral immunoevasion</keyword>
<gene>
    <name evidence="4" type="primary">mtbP</name>
</gene>
<sequence length="443" mass="50510">MSKLRVMSLFSGIGAFEAALRNIGVDYELIGFSEIDKYAIKSYCAIHNVSETLNVGDISKAKKDNIPYFDLLTSGFPCPTFSVAGGRDGMEYKCSNCSHEHLITYEDYKKGVKCPKCEAVSKAKDERGTLFFETALLAEEKKPKFVILENVKGLINSGNGQVLRIISETMNNIGYRIDLELLNSKFFNVPQNRERVYIIGIREDLVENEQWVVGQKRNDVLSKGKKRLQEINIKSFNFKWPLQDTVTKRLREILEDFVDEKYYLNEEKTKKLVEQLGTAPLQKQEVREPLMVGHVDLKGHDAIKRVYSPEGLSPTLTTMGGGHREPKIAEKQKEVRAVLTPEREEKRQNGRRFKENGEPAFTVNTIDRHGVAIGEYPKYKIRKLSPLECWRLQAFDDEDFEKAFAAGISNSQLYKQAGNSITVSVLESIFQELIHTYVNKESE</sequence>
<proteinExistence type="inferred from homology"/>
<organismHost>
    <name type="scientific">Bacillus pumilus</name>
    <name type="common">Bacillus mesentericus</name>
    <dbReference type="NCBI Taxonomy" id="1408"/>
</organismHost>
<organismHost>
    <name type="scientific">Bacillus subtilis</name>
    <dbReference type="NCBI Taxonomy" id="1423"/>
</organismHost>
<reference key="1">
    <citation type="journal article" date="1998" name="Proc. Natl. Acad. Sci. U.S.A.">
        <title>Introns and intein coding sequence in the ribonucleotide reductase genes of Bacillus subtilis temperate bacteriophage SPbeta.</title>
        <authorList>
            <person name="Lazarevic V."/>
            <person name="Soldo B."/>
            <person name="Duesterhoeft A."/>
            <person name="Hilbert H."/>
            <person name="Maueel C."/>
            <person name="Karamata D."/>
        </authorList>
    </citation>
    <scope>NUCLEOTIDE SEQUENCE [GENOMIC DNA]</scope>
</reference>
<reference key="2">
    <citation type="journal article" date="1986" name="Gene">
        <title>DNA methyltransferase genes of Bacillus subtilis phages: comparison of their nucleotide sequences.</title>
        <authorList>
            <person name="Tran-Betcke A."/>
            <person name="Behrens B."/>
            <person name="Noyer-Weidner M."/>
            <person name="Trautner T.A."/>
        </authorList>
    </citation>
    <scope>NUCLEOTIDE SEQUENCE [GENOMIC DNA] OF 1-143 AND 476-589</scope>
</reference>
<reference key="3">
    <citation type="journal article" date="2003" name="Nucleic Acids Res.">
        <title>A nomenclature for restriction enzymes, DNA methyltransferases, homing endonucleases and their genes.</title>
        <authorList>
            <person name="Roberts R.J."/>
            <person name="Belfort M."/>
            <person name="Bestor T."/>
            <person name="Bhagwat A.S."/>
            <person name="Bickle T.A."/>
            <person name="Bitinaite J."/>
            <person name="Blumenthal R.M."/>
            <person name="Degtyarev S.K."/>
            <person name="Dryden D.T."/>
            <person name="Dybvig K."/>
            <person name="Firman K."/>
            <person name="Gromova E.S."/>
            <person name="Gumport R.I."/>
            <person name="Halford S.E."/>
            <person name="Hattman S."/>
            <person name="Heitman J."/>
            <person name="Hornby D.P."/>
            <person name="Janulaitis A."/>
            <person name="Jeltsch A."/>
            <person name="Josephsen J."/>
            <person name="Kiss A."/>
            <person name="Klaenhammer T.R."/>
            <person name="Kobayashi I."/>
            <person name="Kong H."/>
            <person name="Krueger D.H."/>
            <person name="Lacks S."/>
            <person name="Marinus M.G."/>
            <person name="Miyahara M."/>
            <person name="Morgan R.D."/>
            <person name="Murray N.E."/>
            <person name="Nagaraja V."/>
            <person name="Piekarowicz A."/>
            <person name="Pingoud A."/>
            <person name="Raleigh E."/>
            <person name="Rao D.N."/>
            <person name="Reich N."/>
            <person name="Repin V.E."/>
            <person name="Selker E.U."/>
            <person name="Shaw P.C."/>
            <person name="Stein D.C."/>
            <person name="Stoddard B.L."/>
            <person name="Szybalski W."/>
            <person name="Trautner T.A."/>
            <person name="Van Etten J.L."/>
            <person name="Vitor J.M."/>
            <person name="Wilson G.G."/>
            <person name="Xu S.Y."/>
        </authorList>
    </citation>
    <scope>NOMENCLATURE</scope>
</reference>
<comment type="function">
    <text evidence="3 5">A methyltransferase that methylates C-1 within the sequences 5'-GGCC-3' and 5'-GCNGC-3' (PubMed:12654995). Modification confers resistance against restriction enzymes that recognize these sequences (Probable).</text>
</comment>
<comment type="catalytic activity">
    <reaction evidence="2">
        <text>a 2'-deoxycytidine in DNA + S-adenosyl-L-methionine = a 5-methyl-2'-deoxycytidine in DNA + S-adenosyl-L-homocysteine + H(+)</text>
        <dbReference type="Rhea" id="RHEA:13681"/>
        <dbReference type="Rhea" id="RHEA-COMP:11369"/>
        <dbReference type="Rhea" id="RHEA-COMP:11370"/>
        <dbReference type="ChEBI" id="CHEBI:15378"/>
        <dbReference type="ChEBI" id="CHEBI:57856"/>
        <dbReference type="ChEBI" id="CHEBI:59789"/>
        <dbReference type="ChEBI" id="CHEBI:85452"/>
        <dbReference type="ChEBI" id="CHEBI:85454"/>
        <dbReference type="EC" id="2.1.1.37"/>
    </reaction>
</comment>
<comment type="similarity">
    <text evidence="1">Belongs to the class I-like SAM-binding methyltransferase superfamily. C5-methyltransferase family.</text>
</comment>
<organism>
    <name type="scientific">Bacillus phage SPbeta</name>
    <name type="common">Bacillus phage SPBc2</name>
    <name type="synonym">Bacteriophage SP-beta</name>
    <dbReference type="NCBI Taxonomy" id="2932878"/>
    <lineage>
        <taxon>Viruses</taxon>
        <taxon>Duplodnaviria</taxon>
        <taxon>Heunggongvirae</taxon>
        <taxon>Uroviricota</taxon>
        <taxon>Caudoviricetes</taxon>
        <taxon>Spbetavirus</taxon>
        <taxon>Spbetavirus SPbeta</taxon>
    </lineage>
</organism>